<comment type="catalytic activity">
    <reaction>
        <text>alpha-D-galactose + ATP = alpha-D-galactose 1-phosphate + ADP + H(+)</text>
        <dbReference type="Rhea" id="RHEA:13553"/>
        <dbReference type="ChEBI" id="CHEBI:15378"/>
        <dbReference type="ChEBI" id="CHEBI:28061"/>
        <dbReference type="ChEBI" id="CHEBI:30616"/>
        <dbReference type="ChEBI" id="CHEBI:58336"/>
        <dbReference type="ChEBI" id="CHEBI:456216"/>
        <dbReference type="EC" id="2.7.1.6"/>
    </reaction>
</comment>
<comment type="pathway">
    <text>Carbohydrate metabolism; galactose metabolism.</text>
</comment>
<comment type="similarity">
    <text evidence="3">Belongs to the GHMP kinase family. GalK subfamily.</text>
</comment>
<protein>
    <recommendedName>
        <fullName>Galactokinase</fullName>
        <ecNumber>2.7.1.6</ecNumber>
    </recommendedName>
    <alternativeName>
        <fullName>Galactose kinase</fullName>
    </alternativeName>
</protein>
<organism>
    <name type="scientific">Dictyostelium discoideum</name>
    <name type="common">Social amoeba</name>
    <dbReference type="NCBI Taxonomy" id="44689"/>
    <lineage>
        <taxon>Eukaryota</taxon>
        <taxon>Amoebozoa</taxon>
        <taxon>Evosea</taxon>
        <taxon>Eumycetozoa</taxon>
        <taxon>Dictyostelia</taxon>
        <taxon>Dictyosteliales</taxon>
        <taxon>Dictyosteliaceae</taxon>
        <taxon>Dictyostelium</taxon>
    </lineage>
</organism>
<feature type="chain" id="PRO_0000320046" description="Galactokinase">
    <location>
        <begin position="1"/>
        <end position="501"/>
    </location>
</feature>
<feature type="active site" description="Proton acceptor" evidence="2">
    <location>
        <position position="207"/>
    </location>
</feature>
<feature type="binding site" evidence="1">
    <location>
        <position position="54"/>
    </location>
    <ligand>
        <name>alpha-D-galactose</name>
        <dbReference type="ChEBI" id="CHEBI:28061"/>
    </ligand>
</feature>
<feature type="binding site" evidence="1">
    <location>
        <position position="60"/>
    </location>
    <ligand>
        <name>alpha-D-galactose</name>
        <dbReference type="ChEBI" id="CHEBI:28061"/>
    </ligand>
</feature>
<feature type="binding site" evidence="1">
    <location>
        <position position="61"/>
    </location>
    <ligand>
        <name>alpha-D-galactose</name>
        <dbReference type="ChEBI" id="CHEBI:28061"/>
    </ligand>
</feature>
<feature type="binding site" evidence="1">
    <location>
        <position position="63"/>
    </location>
    <ligand>
        <name>alpha-D-galactose</name>
        <dbReference type="ChEBI" id="CHEBI:28061"/>
    </ligand>
</feature>
<feature type="binding site" evidence="1">
    <location>
        <position position="158"/>
    </location>
    <ligand>
        <name>ATP</name>
        <dbReference type="ChEBI" id="CHEBI:30616"/>
    </ligand>
</feature>
<feature type="binding site" evidence="1">
    <location>
        <position position="160"/>
    </location>
    <ligand>
        <name>ATP</name>
        <dbReference type="ChEBI" id="CHEBI:30616"/>
    </ligand>
</feature>
<feature type="binding site" evidence="1">
    <location>
        <position position="162"/>
    </location>
    <ligand>
        <name>ATP</name>
        <dbReference type="ChEBI" id="CHEBI:30616"/>
    </ligand>
</feature>
<feature type="binding site" evidence="1">
    <location>
        <position position="163"/>
    </location>
    <ligand>
        <name>ATP</name>
        <dbReference type="ChEBI" id="CHEBI:30616"/>
    </ligand>
</feature>
<feature type="binding site" evidence="1">
    <location>
        <position position="207"/>
    </location>
    <ligand>
        <name>alpha-D-galactose</name>
        <dbReference type="ChEBI" id="CHEBI:28061"/>
    </ligand>
</feature>
<feature type="binding site" evidence="1">
    <location>
        <position position="250"/>
    </location>
    <ligand>
        <name>ATP</name>
        <dbReference type="ChEBI" id="CHEBI:30616"/>
    </ligand>
</feature>
<feature type="binding site" evidence="1">
    <location>
        <position position="252"/>
    </location>
    <ligand>
        <name>ATP</name>
        <dbReference type="ChEBI" id="CHEBI:30616"/>
    </ligand>
</feature>
<feature type="binding site" evidence="1">
    <location>
        <position position="260"/>
    </location>
    <ligand>
        <name>alpha-D-galactose</name>
        <dbReference type="ChEBI" id="CHEBI:28061"/>
    </ligand>
</feature>
<feature type="site" description="Transition state stabilizer" evidence="2">
    <location>
        <position position="54"/>
    </location>
</feature>
<proteinExistence type="inferred from homology"/>
<evidence type="ECO:0000250" key="1">
    <source>
        <dbReference type="UniProtKB" id="P04385"/>
    </source>
</evidence>
<evidence type="ECO:0000250" key="2">
    <source>
        <dbReference type="UniProtKB" id="Q9HHB6"/>
    </source>
</evidence>
<evidence type="ECO:0000305" key="3"/>
<keyword id="KW-0067">ATP-binding</keyword>
<keyword id="KW-0119">Carbohydrate metabolism</keyword>
<keyword id="KW-0299">Galactose metabolism</keyword>
<keyword id="KW-0418">Kinase</keyword>
<keyword id="KW-0547">Nucleotide-binding</keyword>
<keyword id="KW-1185">Reference proteome</keyword>
<keyword id="KW-0808">Transferase</keyword>
<name>GALK_DICDI</name>
<gene>
    <name type="primary">galK</name>
    <name type="ORF">DDB_G0292112</name>
</gene>
<accession>Q54DN6</accession>
<dbReference type="EC" id="2.7.1.6"/>
<dbReference type="EMBL" id="AAFI02000187">
    <property type="protein sequence ID" value="EAL61412.1"/>
    <property type="molecule type" value="Genomic_DNA"/>
</dbReference>
<dbReference type="RefSeq" id="XP_629836.1">
    <property type="nucleotide sequence ID" value="XM_629834.1"/>
</dbReference>
<dbReference type="SMR" id="Q54DN6"/>
<dbReference type="FunCoup" id="Q54DN6">
    <property type="interactions" value="325"/>
</dbReference>
<dbReference type="STRING" id="44689.Q54DN6"/>
<dbReference type="PaxDb" id="44689-DDB0231667"/>
<dbReference type="EnsemblProtists" id="EAL61412">
    <property type="protein sequence ID" value="EAL61412"/>
    <property type="gene ID" value="DDB_G0292112"/>
</dbReference>
<dbReference type="GeneID" id="8628517"/>
<dbReference type="KEGG" id="ddi:DDB_G0292112"/>
<dbReference type="dictyBase" id="DDB_G0292112">
    <property type="gene designation" value="galK"/>
</dbReference>
<dbReference type="VEuPathDB" id="AmoebaDB:DDB_G0292112"/>
<dbReference type="eggNOG" id="KOG0631">
    <property type="taxonomic scope" value="Eukaryota"/>
</dbReference>
<dbReference type="HOGENOM" id="CLU_017814_6_2_1"/>
<dbReference type="InParanoid" id="Q54DN6"/>
<dbReference type="OMA" id="GFHDTYF"/>
<dbReference type="PhylomeDB" id="Q54DN6"/>
<dbReference type="UniPathway" id="UPA00214"/>
<dbReference type="PRO" id="PR:Q54DN6"/>
<dbReference type="Proteomes" id="UP000002195">
    <property type="component" value="Chromosome 6"/>
</dbReference>
<dbReference type="GO" id="GO:0005829">
    <property type="term" value="C:cytosol"/>
    <property type="evidence" value="ECO:0000318"/>
    <property type="project" value="GO_Central"/>
</dbReference>
<dbReference type="GO" id="GO:0005524">
    <property type="term" value="F:ATP binding"/>
    <property type="evidence" value="ECO:0007669"/>
    <property type="project" value="UniProtKB-KW"/>
</dbReference>
<dbReference type="GO" id="GO:0004335">
    <property type="term" value="F:galactokinase activity"/>
    <property type="evidence" value="ECO:0000250"/>
    <property type="project" value="dictyBase"/>
</dbReference>
<dbReference type="GO" id="GO:0019388">
    <property type="term" value="P:galactose catabolic process"/>
    <property type="evidence" value="ECO:0000250"/>
    <property type="project" value="dictyBase"/>
</dbReference>
<dbReference type="GO" id="GO:0006012">
    <property type="term" value="P:galactose metabolic process"/>
    <property type="evidence" value="ECO:0000318"/>
    <property type="project" value="GO_Central"/>
</dbReference>
<dbReference type="FunFam" id="1.20.1440.340:FF:000003">
    <property type="entry name" value="GAL1p Galactokinase"/>
    <property type="match status" value="1"/>
</dbReference>
<dbReference type="Gene3D" id="1.20.1440.340">
    <property type="match status" value="1"/>
</dbReference>
<dbReference type="Gene3D" id="3.30.230.10">
    <property type="match status" value="1"/>
</dbReference>
<dbReference type="Gene3D" id="3.30.70.3170">
    <property type="match status" value="1"/>
</dbReference>
<dbReference type="InterPro" id="IPR000705">
    <property type="entry name" value="Galactokinase"/>
</dbReference>
<dbReference type="InterPro" id="IPR019741">
    <property type="entry name" value="Galactokinase_CS"/>
</dbReference>
<dbReference type="InterPro" id="IPR019539">
    <property type="entry name" value="GalKase_N"/>
</dbReference>
<dbReference type="InterPro" id="IPR013750">
    <property type="entry name" value="GHMP_kinase_C_dom"/>
</dbReference>
<dbReference type="InterPro" id="IPR036554">
    <property type="entry name" value="GHMP_kinase_C_sf"/>
</dbReference>
<dbReference type="InterPro" id="IPR006204">
    <property type="entry name" value="GHMP_kinase_N_dom"/>
</dbReference>
<dbReference type="InterPro" id="IPR006206">
    <property type="entry name" value="Mevalonate/galactokinase"/>
</dbReference>
<dbReference type="InterPro" id="IPR020568">
    <property type="entry name" value="Ribosomal_Su5_D2-typ_SF"/>
</dbReference>
<dbReference type="InterPro" id="IPR014721">
    <property type="entry name" value="Ribsml_uS5_D2-typ_fold_subgr"/>
</dbReference>
<dbReference type="NCBIfam" id="TIGR00131">
    <property type="entry name" value="gal_kin"/>
    <property type="match status" value="1"/>
</dbReference>
<dbReference type="PANTHER" id="PTHR10457:SF7">
    <property type="entry name" value="GALACTOKINASE-RELATED"/>
    <property type="match status" value="1"/>
</dbReference>
<dbReference type="PANTHER" id="PTHR10457">
    <property type="entry name" value="MEVALONATE KINASE/GALACTOKINASE"/>
    <property type="match status" value="1"/>
</dbReference>
<dbReference type="Pfam" id="PF10509">
    <property type="entry name" value="GalKase_gal_bdg"/>
    <property type="match status" value="1"/>
</dbReference>
<dbReference type="Pfam" id="PF08544">
    <property type="entry name" value="GHMP_kinases_C"/>
    <property type="match status" value="1"/>
</dbReference>
<dbReference type="Pfam" id="PF00288">
    <property type="entry name" value="GHMP_kinases_N"/>
    <property type="match status" value="1"/>
</dbReference>
<dbReference type="PIRSF" id="PIRSF000530">
    <property type="entry name" value="Galactokinase"/>
    <property type="match status" value="1"/>
</dbReference>
<dbReference type="PRINTS" id="PR00473">
    <property type="entry name" value="GALCTOKINASE"/>
</dbReference>
<dbReference type="PRINTS" id="PR00959">
    <property type="entry name" value="MEVGALKINASE"/>
</dbReference>
<dbReference type="SUPFAM" id="SSF55060">
    <property type="entry name" value="GHMP Kinase, C-terminal domain"/>
    <property type="match status" value="1"/>
</dbReference>
<dbReference type="SUPFAM" id="SSF54211">
    <property type="entry name" value="Ribosomal protein S5 domain 2-like"/>
    <property type="match status" value="1"/>
</dbReference>
<dbReference type="PROSITE" id="PS00106">
    <property type="entry name" value="GALACTOKINASE"/>
    <property type="match status" value="1"/>
</dbReference>
<reference key="1">
    <citation type="journal article" date="2005" name="Nature">
        <title>The genome of the social amoeba Dictyostelium discoideum.</title>
        <authorList>
            <person name="Eichinger L."/>
            <person name="Pachebat J.A."/>
            <person name="Gloeckner G."/>
            <person name="Rajandream M.A."/>
            <person name="Sucgang R."/>
            <person name="Berriman M."/>
            <person name="Song J."/>
            <person name="Olsen R."/>
            <person name="Szafranski K."/>
            <person name="Xu Q."/>
            <person name="Tunggal B."/>
            <person name="Kummerfeld S."/>
            <person name="Madera M."/>
            <person name="Konfortov B.A."/>
            <person name="Rivero F."/>
            <person name="Bankier A.T."/>
            <person name="Lehmann R."/>
            <person name="Hamlin N."/>
            <person name="Davies R."/>
            <person name="Gaudet P."/>
            <person name="Fey P."/>
            <person name="Pilcher K."/>
            <person name="Chen G."/>
            <person name="Saunders D."/>
            <person name="Sodergren E.J."/>
            <person name="Davis P."/>
            <person name="Kerhornou A."/>
            <person name="Nie X."/>
            <person name="Hall N."/>
            <person name="Anjard C."/>
            <person name="Hemphill L."/>
            <person name="Bason N."/>
            <person name="Farbrother P."/>
            <person name="Desany B."/>
            <person name="Just E."/>
            <person name="Morio T."/>
            <person name="Rost R."/>
            <person name="Churcher C.M."/>
            <person name="Cooper J."/>
            <person name="Haydock S."/>
            <person name="van Driessche N."/>
            <person name="Cronin A."/>
            <person name="Goodhead I."/>
            <person name="Muzny D.M."/>
            <person name="Mourier T."/>
            <person name="Pain A."/>
            <person name="Lu M."/>
            <person name="Harper D."/>
            <person name="Lindsay R."/>
            <person name="Hauser H."/>
            <person name="James K.D."/>
            <person name="Quiles M."/>
            <person name="Madan Babu M."/>
            <person name="Saito T."/>
            <person name="Buchrieser C."/>
            <person name="Wardroper A."/>
            <person name="Felder M."/>
            <person name="Thangavelu M."/>
            <person name="Johnson D."/>
            <person name="Knights A."/>
            <person name="Loulseged H."/>
            <person name="Mungall K.L."/>
            <person name="Oliver K."/>
            <person name="Price C."/>
            <person name="Quail M.A."/>
            <person name="Urushihara H."/>
            <person name="Hernandez J."/>
            <person name="Rabbinowitsch E."/>
            <person name="Steffen D."/>
            <person name="Sanders M."/>
            <person name="Ma J."/>
            <person name="Kohara Y."/>
            <person name="Sharp S."/>
            <person name="Simmonds M.N."/>
            <person name="Spiegler S."/>
            <person name="Tivey A."/>
            <person name="Sugano S."/>
            <person name="White B."/>
            <person name="Walker D."/>
            <person name="Woodward J.R."/>
            <person name="Winckler T."/>
            <person name="Tanaka Y."/>
            <person name="Shaulsky G."/>
            <person name="Schleicher M."/>
            <person name="Weinstock G.M."/>
            <person name="Rosenthal A."/>
            <person name="Cox E.C."/>
            <person name="Chisholm R.L."/>
            <person name="Gibbs R.A."/>
            <person name="Loomis W.F."/>
            <person name="Platzer M."/>
            <person name="Kay R.R."/>
            <person name="Williams J.G."/>
            <person name="Dear P.H."/>
            <person name="Noegel A.A."/>
            <person name="Barrell B.G."/>
            <person name="Kuspa A."/>
        </authorList>
    </citation>
    <scope>NUCLEOTIDE SEQUENCE [LARGE SCALE GENOMIC DNA]</scope>
    <source>
        <strain>AX4</strain>
    </source>
</reference>
<sequence length="501" mass="56128">MDSFNPALPSIVESLDDIYKNFENNKKRYEELNETFSKIYNGDKPIFYFRAPGRVNLIGEHVDYSGYCVLPFALEQDTIVAVSFNKLNNDIINIHNCNEKYTPKSIDVSGGGDIEIDMKRHHWTNYVLAAWKGVSQAMEKGGKLKSVNLLYSGNVPMGAGVSSSSALVCVSTLAISYCNNLILNKEELAQLSIKSERYVGVESGGMDQSISFLAEQNTAKLIEFHPSLKTFDVQLPKGVSFVICNSLVDSLKVVTGATNYNLRVVECRLAAVLLAFHCGLSWEKVRRLRDVQYQGNFDLPQLIQLTEQHLSEKQTYTREEVATILDISVEQLVKTYFPSGITVQSEHFELYKRARHVFTETQRVYKFSEICKQQSNFNNNNNNNNNNSSNNTNIIQELGKLMNESHESCSKLFECSCSELDSLTKICRENGALGSRLTGAGWGGCVISLVPNSKVDSFLDAIDTHYYSKFVNPEKLKNIEKSSYSFFTTPCKGACIVSSTV</sequence>